<sequence>MMIARMETSATAAAATSAPRLRLAKRSLFDPMIVRSALPQSLRKLAPRVQARNPVMLVVLVGAVITTLAFLRDLASSTAQENVFNGLVAAFLWFTVLFANFAEAMAEGRGKAQAAALRKVRSETMANRRTAAGNIESVPSSRLDLDDVVEVSAGETIPSDGEIIEGIASVDESAITGESAPVIRESGGDRSAVTGGTVVLSDRIVVRITAKQGQTFIDRMIALVEGAARQQTPNEIALNILLAGLTIIFLLAVVTLQPFAIYSGGGQRVVVLVALLVCLIPTTIGALLSAIGIAGMDRLVQHNVLATSGRAVEAAGDVNTLLLDKTGTITLGNRQATEFVPINGVSAEAVADAAQLSSLADETPEGRSIVVLAKDEFGLRARDEGVMSHARFVPFTAETRMSGVDLAEVSGIRRIRKGAAAAVMKWVRDHGGHPTEEVGAIVDGISSGGGTPLVVAEWTDNSSARAIGVVHLKDIVKVGIRERFDEMRRMSIRTVMITGDNPATAKAIAQEAGVDDFLAEATPEDKLALIKREQQGGRLVAMTGDGTNDAPALAQADVGVAMNTGTQAAREAGNMVDLDSDPTKLIEVVEIGKQLLITRGALTTFSIANDVAKYFAIIPAMFVGLYPVLDKLNVMALHSPRSAILSAVIFNALVIVALIPLALRGVRFRAESASAMLRRNLLIYGLGGLVVPFIGIKLVDLVIVALGVS</sequence>
<organism>
    <name type="scientific">Mycobacterium tuberculosis (strain CDC 1551 / Oshkosh)</name>
    <dbReference type="NCBI Taxonomy" id="83331"/>
    <lineage>
        <taxon>Bacteria</taxon>
        <taxon>Bacillati</taxon>
        <taxon>Actinomycetota</taxon>
        <taxon>Actinomycetes</taxon>
        <taxon>Mycobacteriales</taxon>
        <taxon>Mycobacteriaceae</taxon>
        <taxon>Mycobacterium</taxon>
        <taxon>Mycobacterium tuberculosis complex</taxon>
    </lineage>
</organism>
<keyword id="KW-0067">ATP-binding</keyword>
<keyword id="KW-1003">Cell membrane</keyword>
<keyword id="KW-0406">Ion transport</keyword>
<keyword id="KW-0460">Magnesium</keyword>
<keyword id="KW-0472">Membrane</keyword>
<keyword id="KW-0479">Metal-binding</keyword>
<keyword id="KW-0547">Nucleotide-binding</keyword>
<keyword id="KW-0597">Phosphoprotein</keyword>
<keyword id="KW-0630">Potassium</keyword>
<keyword id="KW-0633">Potassium transport</keyword>
<keyword id="KW-1185">Reference proteome</keyword>
<keyword id="KW-1278">Translocase</keyword>
<keyword id="KW-0812">Transmembrane</keyword>
<keyword id="KW-1133">Transmembrane helix</keyword>
<keyword id="KW-0813">Transport</keyword>
<protein>
    <recommendedName>
        <fullName evidence="1">Potassium-transporting ATPase ATP-binding subunit</fullName>
        <ecNumber evidence="1">7.2.2.6</ecNumber>
    </recommendedName>
    <alternativeName>
        <fullName evidence="1">ATP phosphohydrolase [potassium-transporting] B chain</fullName>
    </alternativeName>
    <alternativeName>
        <fullName evidence="1">Potassium-binding and translocating subunit B</fullName>
    </alternativeName>
    <alternativeName>
        <fullName evidence="1">Potassium-translocating ATPase B chain</fullName>
    </alternativeName>
</protein>
<proteinExistence type="inferred from homology"/>
<feature type="chain" id="PRO_0000426887" description="Potassium-transporting ATPase ATP-binding subunit">
    <location>
        <begin position="1"/>
        <end position="709"/>
    </location>
</feature>
<feature type="transmembrane region" description="Helical" evidence="1">
    <location>
        <begin position="55"/>
        <end position="75"/>
    </location>
</feature>
<feature type="transmembrane region" description="Helical" evidence="1">
    <location>
        <begin position="86"/>
        <end position="106"/>
    </location>
</feature>
<feature type="transmembrane region" description="Helical" evidence="1">
    <location>
        <begin position="236"/>
        <end position="256"/>
    </location>
</feature>
<feature type="transmembrane region" description="Helical" evidence="1">
    <location>
        <begin position="269"/>
        <end position="289"/>
    </location>
</feature>
<feature type="transmembrane region" description="Helical" evidence="1">
    <location>
        <begin position="615"/>
        <end position="635"/>
    </location>
</feature>
<feature type="transmembrane region" description="Helical" evidence="1">
    <location>
        <begin position="643"/>
        <end position="663"/>
    </location>
</feature>
<feature type="transmembrane region" description="Helical" evidence="1">
    <location>
        <begin position="688"/>
        <end position="708"/>
    </location>
</feature>
<feature type="active site" description="4-aspartylphosphate intermediate" evidence="1">
    <location>
        <position position="324"/>
    </location>
</feature>
<feature type="binding site" evidence="1">
    <location>
        <position position="361"/>
    </location>
    <ligand>
        <name>ATP</name>
        <dbReference type="ChEBI" id="CHEBI:30616"/>
    </ligand>
</feature>
<feature type="binding site" evidence="1">
    <location>
        <position position="365"/>
    </location>
    <ligand>
        <name>ATP</name>
        <dbReference type="ChEBI" id="CHEBI:30616"/>
    </ligand>
</feature>
<feature type="binding site" evidence="1">
    <location>
        <begin position="395"/>
        <end position="402"/>
    </location>
    <ligand>
        <name>ATP</name>
        <dbReference type="ChEBI" id="CHEBI:30616"/>
    </ligand>
</feature>
<feature type="binding site" evidence="1">
    <location>
        <position position="417"/>
    </location>
    <ligand>
        <name>ATP</name>
        <dbReference type="ChEBI" id="CHEBI:30616"/>
    </ligand>
</feature>
<feature type="binding site" evidence="1">
    <location>
        <position position="545"/>
    </location>
    <ligand>
        <name>Mg(2+)</name>
        <dbReference type="ChEBI" id="CHEBI:18420"/>
    </ligand>
</feature>
<feature type="binding site" evidence="1">
    <location>
        <position position="549"/>
    </location>
    <ligand>
        <name>Mg(2+)</name>
        <dbReference type="ChEBI" id="CHEBI:18420"/>
    </ligand>
</feature>
<dbReference type="EC" id="7.2.2.6" evidence="1"/>
<dbReference type="EMBL" id="AE000516">
    <property type="protein sequence ID" value="AAK45311.1"/>
    <property type="molecule type" value="Genomic_DNA"/>
</dbReference>
<dbReference type="PIR" id="A70624">
    <property type="entry name" value="A70624"/>
</dbReference>
<dbReference type="RefSeq" id="WP_003405320.1">
    <property type="nucleotide sequence ID" value="NZ_KK341227.1"/>
</dbReference>
<dbReference type="SMR" id="P9WPU2"/>
<dbReference type="KEGG" id="mtc:MT1059"/>
<dbReference type="PATRIC" id="fig|83331.31.peg.1138"/>
<dbReference type="HOGENOM" id="CLU_025728_2_0_11"/>
<dbReference type="Proteomes" id="UP000001020">
    <property type="component" value="Chromosome"/>
</dbReference>
<dbReference type="GO" id="GO:0005886">
    <property type="term" value="C:plasma membrane"/>
    <property type="evidence" value="ECO:0007669"/>
    <property type="project" value="UniProtKB-SubCell"/>
</dbReference>
<dbReference type="GO" id="GO:0005524">
    <property type="term" value="F:ATP binding"/>
    <property type="evidence" value="ECO:0007669"/>
    <property type="project" value="UniProtKB-UniRule"/>
</dbReference>
<dbReference type="GO" id="GO:0016887">
    <property type="term" value="F:ATP hydrolysis activity"/>
    <property type="evidence" value="ECO:0007669"/>
    <property type="project" value="InterPro"/>
</dbReference>
<dbReference type="GO" id="GO:0000287">
    <property type="term" value="F:magnesium ion binding"/>
    <property type="evidence" value="ECO:0007669"/>
    <property type="project" value="UniProtKB-UniRule"/>
</dbReference>
<dbReference type="GO" id="GO:0008556">
    <property type="term" value="F:P-type potassium transmembrane transporter activity"/>
    <property type="evidence" value="ECO:0007669"/>
    <property type="project" value="UniProtKB-UniRule"/>
</dbReference>
<dbReference type="CDD" id="cd02078">
    <property type="entry name" value="P-type_ATPase_K"/>
    <property type="match status" value="1"/>
</dbReference>
<dbReference type="FunFam" id="2.70.150.10:FF:000033">
    <property type="entry name" value="Potassium-transporting ATPase ATP-binding subunit"/>
    <property type="match status" value="1"/>
</dbReference>
<dbReference type="FunFam" id="3.40.1110.10:FF:000007">
    <property type="entry name" value="Potassium-transporting ATPase ATP-binding subunit"/>
    <property type="match status" value="1"/>
</dbReference>
<dbReference type="Gene3D" id="3.40.1110.10">
    <property type="entry name" value="Calcium-transporting ATPase, cytoplasmic domain N"/>
    <property type="match status" value="1"/>
</dbReference>
<dbReference type="Gene3D" id="2.70.150.10">
    <property type="entry name" value="Calcium-transporting ATPase, cytoplasmic transduction domain A"/>
    <property type="match status" value="1"/>
</dbReference>
<dbReference type="Gene3D" id="3.40.50.1000">
    <property type="entry name" value="HAD superfamily/HAD-like"/>
    <property type="match status" value="1"/>
</dbReference>
<dbReference type="HAMAP" id="MF_00285">
    <property type="entry name" value="KdpB"/>
    <property type="match status" value="1"/>
</dbReference>
<dbReference type="InterPro" id="IPR023299">
    <property type="entry name" value="ATPase_P-typ_cyto_dom_N"/>
</dbReference>
<dbReference type="InterPro" id="IPR018303">
    <property type="entry name" value="ATPase_P-typ_P_site"/>
</dbReference>
<dbReference type="InterPro" id="IPR023298">
    <property type="entry name" value="ATPase_P-typ_TM_dom_sf"/>
</dbReference>
<dbReference type="InterPro" id="IPR008250">
    <property type="entry name" value="ATPase_P-typ_transduc_dom_A_sf"/>
</dbReference>
<dbReference type="InterPro" id="IPR036412">
    <property type="entry name" value="HAD-like_sf"/>
</dbReference>
<dbReference type="InterPro" id="IPR023214">
    <property type="entry name" value="HAD_sf"/>
</dbReference>
<dbReference type="InterPro" id="IPR006391">
    <property type="entry name" value="P-type_ATPase_bsu_IA"/>
</dbReference>
<dbReference type="InterPro" id="IPR001757">
    <property type="entry name" value="P_typ_ATPase"/>
</dbReference>
<dbReference type="InterPro" id="IPR044492">
    <property type="entry name" value="P_typ_ATPase_HD_dom"/>
</dbReference>
<dbReference type="NCBIfam" id="TIGR01494">
    <property type="entry name" value="ATPase_P-type"/>
    <property type="match status" value="2"/>
</dbReference>
<dbReference type="NCBIfam" id="TIGR01497">
    <property type="entry name" value="kdpB"/>
    <property type="match status" value="1"/>
</dbReference>
<dbReference type="PANTHER" id="PTHR43743">
    <property type="entry name" value="POTASSIUM-TRANSPORTING ATPASE ATP-BINDING SUBUNIT"/>
    <property type="match status" value="1"/>
</dbReference>
<dbReference type="PANTHER" id="PTHR43743:SF1">
    <property type="entry name" value="POTASSIUM-TRANSPORTING ATPASE ATP-BINDING SUBUNIT"/>
    <property type="match status" value="1"/>
</dbReference>
<dbReference type="Pfam" id="PF00122">
    <property type="entry name" value="E1-E2_ATPase"/>
    <property type="match status" value="1"/>
</dbReference>
<dbReference type="Pfam" id="PF00702">
    <property type="entry name" value="Hydrolase"/>
    <property type="match status" value="1"/>
</dbReference>
<dbReference type="PRINTS" id="PR00119">
    <property type="entry name" value="CATATPASE"/>
</dbReference>
<dbReference type="SFLD" id="SFLDS00003">
    <property type="entry name" value="Haloacid_Dehalogenase"/>
    <property type="match status" value="1"/>
</dbReference>
<dbReference type="SFLD" id="SFLDF00027">
    <property type="entry name" value="p-type_atpase"/>
    <property type="match status" value="1"/>
</dbReference>
<dbReference type="SUPFAM" id="SSF81653">
    <property type="entry name" value="Calcium ATPase, transduction domain A"/>
    <property type="match status" value="1"/>
</dbReference>
<dbReference type="SUPFAM" id="SSF81665">
    <property type="entry name" value="Calcium ATPase, transmembrane domain M"/>
    <property type="match status" value="1"/>
</dbReference>
<dbReference type="SUPFAM" id="SSF56784">
    <property type="entry name" value="HAD-like"/>
    <property type="match status" value="1"/>
</dbReference>
<dbReference type="PROSITE" id="PS00154">
    <property type="entry name" value="ATPASE_E1_E2"/>
    <property type="match status" value="1"/>
</dbReference>
<evidence type="ECO:0000255" key="1">
    <source>
        <dbReference type="HAMAP-Rule" id="MF_00285"/>
    </source>
</evidence>
<accession>P9WPU2</accession>
<accession>L0T5M2</accession>
<accession>P63681</accession>
<accession>P96370</accession>
<reference key="1">
    <citation type="journal article" date="2002" name="J. Bacteriol.">
        <title>Whole-genome comparison of Mycobacterium tuberculosis clinical and laboratory strains.</title>
        <authorList>
            <person name="Fleischmann R.D."/>
            <person name="Alland D."/>
            <person name="Eisen J.A."/>
            <person name="Carpenter L."/>
            <person name="White O."/>
            <person name="Peterson J.D."/>
            <person name="DeBoy R.T."/>
            <person name="Dodson R.J."/>
            <person name="Gwinn M.L."/>
            <person name="Haft D.H."/>
            <person name="Hickey E.K."/>
            <person name="Kolonay J.F."/>
            <person name="Nelson W.C."/>
            <person name="Umayam L.A."/>
            <person name="Ermolaeva M.D."/>
            <person name="Salzberg S.L."/>
            <person name="Delcher A."/>
            <person name="Utterback T.R."/>
            <person name="Weidman J.F."/>
            <person name="Khouri H.M."/>
            <person name="Gill J."/>
            <person name="Mikula A."/>
            <person name="Bishai W."/>
            <person name="Jacobs W.R. Jr."/>
            <person name="Venter J.C."/>
            <person name="Fraser C.M."/>
        </authorList>
    </citation>
    <scope>NUCLEOTIDE SEQUENCE [LARGE SCALE GENOMIC DNA]</scope>
    <source>
        <strain>CDC 1551 / Oshkosh</strain>
    </source>
</reference>
<comment type="function">
    <text evidence="1">Part of the high-affinity ATP-driven potassium transport (or Kdp) system, which catalyzes the hydrolysis of ATP coupled with the electrogenic transport of potassium into the cytoplasm. This subunit is responsible for energy coupling to the transport system and for the release of the potassium ions to the cytoplasm.</text>
</comment>
<comment type="catalytic activity">
    <reaction evidence="1">
        <text>K(+)(out) + ATP + H2O = K(+)(in) + ADP + phosphate + H(+)</text>
        <dbReference type="Rhea" id="RHEA:16777"/>
        <dbReference type="ChEBI" id="CHEBI:15377"/>
        <dbReference type="ChEBI" id="CHEBI:15378"/>
        <dbReference type="ChEBI" id="CHEBI:29103"/>
        <dbReference type="ChEBI" id="CHEBI:30616"/>
        <dbReference type="ChEBI" id="CHEBI:43474"/>
        <dbReference type="ChEBI" id="CHEBI:456216"/>
        <dbReference type="EC" id="7.2.2.6"/>
    </reaction>
    <physiologicalReaction direction="left-to-right" evidence="1">
        <dbReference type="Rhea" id="RHEA:16778"/>
    </physiologicalReaction>
</comment>
<comment type="subunit">
    <text evidence="1">The system is composed of three essential subunits: KdpA, KdpB and KdpC.</text>
</comment>
<comment type="subcellular location">
    <subcellularLocation>
        <location evidence="1">Cell membrane</location>
        <topology evidence="1">Multi-pass membrane protein</topology>
    </subcellularLocation>
</comment>
<comment type="similarity">
    <text evidence="1">Belongs to the cation transport ATPase (P-type) (TC 3.A.3) family. Type IA subfamily.</text>
</comment>
<name>KDPB_MYCTO</name>
<gene>
    <name evidence="1" type="primary">kdpB</name>
    <name type="ordered locus">MT1059</name>
</gene>